<gene>
    <name evidence="1" type="primary">argS</name>
    <name type="ordered locus">SPs1807</name>
</gene>
<name>SYR_STRPQ</name>
<protein>
    <recommendedName>
        <fullName evidence="1">Arginine--tRNA ligase</fullName>
        <ecNumber evidence="1">6.1.1.19</ecNumber>
    </recommendedName>
    <alternativeName>
        <fullName evidence="1">Arginyl-tRNA synthetase</fullName>
        <shortName evidence="1">ArgRS</shortName>
    </alternativeName>
</protein>
<feature type="chain" id="PRO_0000411603" description="Arginine--tRNA ligase">
    <location>
        <begin position="1"/>
        <end position="563"/>
    </location>
</feature>
<feature type="short sequence motif" description="'HIGH' region">
    <location>
        <begin position="121"/>
        <end position="131"/>
    </location>
</feature>
<accession>P0DG27</accession>
<accession>Q8K5J2</accession>
<dbReference type="EC" id="6.1.1.19" evidence="1"/>
<dbReference type="EMBL" id="BA000034">
    <property type="protein sequence ID" value="BAC64902.1"/>
    <property type="molecule type" value="Genomic_DNA"/>
</dbReference>
<dbReference type="RefSeq" id="WP_011055093.1">
    <property type="nucleotide sequence ID" value="NC_004606.1"/>
</dbReference>
<dbReference type="SMR" id="P0DG27"/>
<dbReference type="KEGG" id="sps:SPs1807"/>
<dbReference type="HOGENOM" id="CLU_006406_6_1_9"/>
<dbReference type="GO" id="GO:0005737">
    <property type="term" value="C:cytoplasm"/>
    <property type="evidence" value="ECO:0007669"/>
    <property type="project" value="UniProtKB-SubCell"/>
</dbReference>
<dbReference type="GO" id="GO:0004814">
    <property type="term" value="F:arginine-tRNA ligase activity"/>
    <property type="evidence" value="ECO:0007669"/>
    <property type="project" value="UniProtKB-UniRule"/>
</dbReference>
<dbReference type="GO" id="GO:0005524">
    <property type="term" value="F:ATP binding"/>
    <property type="evidence" value="ECO:0007669"/>
    <property type="project" value="UniProtKB-UniRule"/>
</dbReference>
<dbReference type="GO" id="GO:0006420">
    <property type="term" value="P:arginyl-tRNA aminoacylation"/>
    <property type="evidence" value="ECO:0007669"/>
    <property type="project" value="UniProtKB-UniRule"/>
</dbReference>
<dbReference type="CDD" id="cd07956">
    <property type="entry name" value="Anticodon_Ia_Arg"/>
    <property type="match status" value="1"/>
</dbReference>
<dbReference type="CDD" id="cd00671">
    <property type="entry name" value="ArgRS_core"/>
    <property type="match status" value="1"/>
</dbReference>
<dbReference type="FunFam" id="3.40.50.620:FF:000116">
    <property type="entry name" value="Arginine--tRNA ligase"/>
    <property type="match status" value="1"/>
</dbReference>
<dbReference type="FunFam" id="1.10.730.10:FF:000006">
    <property type="entry name" value="Arginyl-tRNA synthetase 2, mitochondrial"/>
    <property type="match status" value="1"/>
</dbReference>
<dbReference type="Gene3D" id="3.30.1360.70">
    <property type="entry name" value="Arginyl tRNA synthetase N-terminal domain"/>
    <property type="match status" value="1"/>
</dbReference>
<dbReference type="Gene3D" id="3.40.50.620">
    <property type="entry name" value="HUPs"/>
    <property type="match status" value="1"/>
</dbReference>
<dbReference type="Gene3D" id="1.10.730.10">
    <property type="entry name" value="Isoleucyl-tRNA Synthetase, Domain 1"/>
    <property type="match status" value="1"/>
</dbReference>
<dbReference type="HAMAP" id="MF_00123">
    <property type="entry name" value="Arg_tRNA_synth"/>
    <property type="match status" value="1"/>
</dbReference>
<dbReference type="InterPro" id="IPR001278">
    <property type="entry name" value="Arg-tRNA-ligase"/>
</dbReference>
<dbReference type="InterPro" id="IPR005148">
    <property type="entry name" value="Arg-tRNA-synth_N"/>
</dbReference>
<dbReference type="InterPro" id="IPR036695">
    <property type="entry name" value="Arg-tRNA-synth_N_sf"/>
</dbReference>
<dbReference type="InterPro" id="IPR035684">
    <property type="entry name" value="ArgRS_core"/>
</dbReference>
<dbReference type="InterPro" id="IPR008909">
    <property type="entry name" value="DALR_anticod-bd"/>
</dbReference>
<dbReference type="InterPro" id="IPR014729">
    <property type="entry name" value="Rossmann-like_a/b/a_fold"/>
</dbReference>
<dbReference type="InterPro" id="IPR009080">
    <property type="entry name" value="tRNAsynth_Ia_anticodon-bd"/>
</dbReference>
<dbReference type="NCBIfam" id="TIGR00456">
    <property type="entry name" value="argS"/>
    <property type="match status" value="1"/>
</dbReference>
<dbReference type="PANTHER" id="PTHR11956:SF5">
    <property type="entry name" value="ARGININE--TRNA LIGASE, CYTOPLASMIC"/>
    <property type="match status" value="1"/>
</dbReference>
<dbReference type="PANTHER" id="PTHR11956">
    <property type="entry name" value="ARGINYL-TRNA SYNTHETASE"/>
    <property type="match status" value="1"/>
</dbReference>
<dbReference type="Pfam" id="PF03485">
    <property type="entry name" value="Arg_tRNA_synt_N"/>
    <property type="match status" value="1"/>
</dbReference>
<dbReference type="Pfam" id="PF05746">
    <property type="entry name" value="DALR_1"/>
    <property type="match status" value="1"/>
</dbReference>
<dbReference type="Pfam" id="PF00750">
    <property type="entry name" value="tRNA-synt_1d"/>
    <property type="match status" value="1"/>
</dbReference>
<dbReference type="PRINTS" id="PR01038">
    <property type="entry name" value="TRNASYNTHARG"/>
</dbReference>
<dbReference type="SMART" id="SM01016">
    <property type="entry name" value="Arg_tRNA_synt_N"/>
    <property type="match status" value="1"/>
</dbReference>
<dbReference type="SMART" id="SM00836">
    <property type="entry name" value="DALR_1"/>
    <property type="match status" value="1"/>
</dbReference>
<dbReference type="SUPFAM" id="SSF47323">
    <property type="entry name" value="Anticodon-binding domain of a subclass of class I aminoacyl-tRNA synthetases"/>
    <property type="match status" value="1"/>
</dbReference>
<dbReference type="SUPFAM" id="SSF55190">
    <property type="entry name" value="Arginyl-tRNA synthetase (ArgRS), N-terminal 'additional' domain"/>
    <property type="match status" value="1"/>
</dbReference>
<dbReference type="SUPFAM" id="SSF52374">
    <property type="entry name" value="Nucleotidylyl transferase"/>
    <property type="match status" value="1"/>
</dbReference>
<organism>
    <name type="scientific">Streptococcus pyogenes serotype M3 (strain SSI-1)</name>
    <dbReference type="NCBI Taxonomy" id="193567"/>
    <lineage>
        <taxon>Bacteria</taxon>
        <taxon>Bacillati</taxon>
        <taxon>Bacillota</taxon>
        <taxon>Bacilli</taxon>
        <taxon>Lactobacillales</taxon>
        <taxon>Streptococcaceae</taxon>
        <taxon>Streptococcus</taxon>
    </lineage>
</organism>
<sequence length="563" mass="63135">MDTKTLIASEIAKVVPELEQDAIFNLLETPKNSDMGDLAFPAFSLAKVLRKAPQMIASELAEQIDESQFEKVVAVGPYINFFLDKAKISSQVLEQVITAGSDYAQQDEGQGRNVAIDMSSPNIAKPFSIGHLRSTVIGDSLAHIFAKMGYKPVKINHLGDWGKQFGMLIVAYKKWGDEAAVQAHPIDELLKLYVRINAEAETDPTVDEEAREWFRKLEDGDKEATELWQWFRDESLLEFNRLYDQLHVTFDSYNGEAFYNDKMDEVLELLEAKNLLVESKGAQVVNLEKYGIEHPALIKKSDGATLYITRDLAAALYRKRTYDFAKSVYVVGNEQAAHFKQLKAVLKEMGYDWSDDMTHVAFGLVTKGGAKLSTRKGNVILLEPTVAEAINRAASQIEAKNPNLADKEAVAHAVGVGAIKFYDLKTDRMNGYDFDLEAMVSFEGETGPYVQYAHARIQSILRKADFTPSATTTYSLADAESWEIIKLIQDFPRIIKRTSDNFEPSIMAKFAINLAQSFNKYYAHTRILDDNSERDNRLALCYATATVLKEALRLLGVDAPNEM</sequence>
<evidence type="ECO:0000255" key="1">
    <source>
        <dbReference type="HAMAP-Rule" id="MF_00123"/>
    </source>
</evidence>
<proteinExistence type="inferred from homology"/>
<keyword id="KW-0030">Aminoacyl-tRNA synthetase</keyword>
<keyword id="KW-0067">ATP-binding</keyword>
<keyword id="KW-0963">Cytoplasm</keyword>
<keyword id="KW-0436">Ligase</keyword>
<keyword id="KW-0547">Nucleotide-binding</keyword>
<keyword id="KW-0648">Protein biosynthesis</keyword>
<reference key="1">
    <citation type="journal article" date="2003" name="Genome Res.">
        <title>Genome sequence of an M3 strain of Streptococcus pyogenes reveals a large-scale genomic rearrangement in invasive strains and new insights into phage evolution.</title>
        <authorList>
            <person name="Nakagawa I."/>
            <person name="Kurokawa K."/>
            <person name="Yamashita A."/>
            <person name="Nakata M."/>
            <person name="Tomiyasu Y."/>
            <person name="Okahashi N."/>
            <person name="Kawabata S."/>
            <person name="Yamazaki K."/>
            <person name="Shiba T."/>
            <person name="Yasunaga T."/>
            <person name="Hayashi H."/>
            <person name="Hattori M."/>
            <person name="Hamada S."/>
        </authorList>
    </citation>
    <scope>NUCLEOTIDE SEQUENCE [LARGE SCALE GENOMIC DNA]</scope>
    <source>
        <strain>SSI-1</strain>
    </source>
</reference>
<comment type="catalytic activity">
    <reaction evidence="1">
        <text>tRNA(Arg) + L-arginine + ATP = L-arginyl-tRNA(Arg) + AMP + diphosphate</text>
        <dbReference type="Rhea" id="RHEA:20301"/>
        <dbReference type="Rhea" id="RHEA-COMP:9658"/>
        <dbReference type="Rhea" id="RHEA-COMP:9673"/>
        <dbReference type="ChEBI" id="CHEBI:30616"/>
        <dbReference type="ChEBI" id="CHEBI:32682"/>
        <dbReference type="ChEBI" id="CHEBI:33019"/>
        <dbReference type="ChEBI" id="CHEBI:78442"/>
        <dbReference type="ChEBI" id="CHEBI:78513"/>
        <dbReference type="ChEBI" id="CHEBI:456215"/>
        <dbReference type="EC" id="6.1.1.19"/>
    </reaction>
</comment>
<comment type="subunit">
    <text evidence="1">Monomer.</text>
</comment>
<comment type="subcellular location">
    <subcellularLocation>
        <location evidence="1">Cytoplasm</location>
    </subcellularLocation>
</comment>
<comment type="similarity">
    <text evidence="1">Belongs to the class-I aminoacyl-tRNA synthetase family.</text>
</comment>